<proteinExistence type="inferred from homology"/>
<reference key="1">
    <citation type="journal article" date="2010" name="J. Bacteriol.">
        <title>Whole genome sequences of two Xylella fastidiosa strains (M12 and M23) causing almond leaf scorch disease in California.</title>
        <authorList>
            <person name="Chen J."/>
            <person name="Xie G."/>
            <person name="Han S."/>
            <person name="Chertkov O."/>
            <person name="Sims D."/>
            <person name="Civerolo E.L."/>
        </authorList>
    </citation>
    <scope>NUCLEOTIDE SEQUENCE [LARGE SCALE GENOMIC DNA]</scope>
    <source>
        <strain>M23</strain>
    </source>
</reference>
<evidence type="ECO:0000255" key="1">
    <source>
        <dbReference type="HAMAP-Rule" id="MF_00598"/>
    </source>
</evidence>
<dbReference type="EMBL" id="CP001011">
    <property type="protein sequence ID" value="ACB93268.1"/>
    <property type="molecule type" value="Genomic_DNA"/>
</dbReference>
<dbReference type="RefSeq" id="WP_004089636.1">
    <property type="nucleotide sequence ID" value="NC_010577.1"/>
</dbReference>
<dbReference type="SMR" id="B2I8S7"/>
<dbReference type="KEGG" id="xfn:XfasM23_1868"/>
<dbReference type="HOGENOM" id="CLU_133242_0_0_6"/>
<dbReference type="Proteomes" id="UP000001698">
    <property type="component" value="Chromosome"/>
</dbReference>
<dbReference type="HAMAP" id="MF_00598">
    <property type="entry name" value="Smg"/>
    <property type="match status" value="1"/>
</dbReference>
<dbReference type="InterPro" id="IPR007456">
    <property type="entry name" value="Smg"/>
</dbReference>
<dbReference type="NCBIfam" id="NF002897">
    <property type="entry name" value="PRK03430.1"/>
    <property type="match status" value="1"/>
</dbReference>
<dbReference type="PANTHER" id="PTHR38692">
    <property type="entry name" value="PROTEIN SMG"/>
    <property type="match status" value="1"/>
</dbReference>
<dbReference type="PANTHER" id="PTHR38692:SF1">
    <property type="entry name" value="PROTEIN SMG"/>
    <property type="match status" value="1"/>
</dbReference>
<dbReference type="Pfam" id="PF04361">
    <property type="entry name" value="DUF494"/>
    <property type="match status" value="1"/>
</dbReference>
<feature type="chain" id="PRO_1000129913" description="Protein Smg homolog">
    <location>
        <begin position="1"/>
        <end position="157"/>
    </location>
</feature>
<name>SMG_XYLF2</name>
<protein>
    <recommendedName>
        <fullName evidence="1">Protein Smg homolog</fullName>
    </recommendedName>
</protein>
<sequence length="157" mass="18045">MKESILAVLLYLFEYYFSENADLVRDRDSLQNSLIQVGFSPAEINKAFEWLDALAANRPTLTNPRVNGPVRVLHGPELDKLDVESRGFLLFLEQQGILNTEQRELVLDRAMALDQEELDLDDMKWVVLMVLFNQPGAEAAYAWMETQMFGNEPEQLH</sequence>
<organism>
    <name type="scientific">Xylella fastidiosa (strain M23)</name>
    <dbReference type="NCBI Taxonomy" id="405441"/>
    <lineage>
        <taxon>Bacteria</taxon>
        <taxon>Pseudomonadati</taxon>
        <taxon>Pseudomonadota</taxon>
        <taxon>Gammaproteobacteria</taxon>
        <taxon>Lysobacterales</taxon>
        <taxon>Lysobacteraceae</taxon>
        <taxon>Xylella</taxon>
    </lineage>
</organism>
<accession>B2I8S7</accession>
<comment type="similarity">
    <text evidence="1">Belongs to the Smg family.</text>
</comment>
<gene>
    <name evidence="1" type="primary">smg</name>
    <name type="ordered locus">XfasM23_1868</name>
</gene>